<reference key="1">
    <citation type="journal article" date="1993" name="Mol. Microbiol.">
        <title>Molecular cloning and characterization of 13 out genes from Erwinia carotovora subspecies carotovora: genes encoding members of a general secretion pathway (GSP) widespread in Gram-negative bacteria.</title>
        <authorList>
            <person name="Reeves P.J."/>
            <person name="Whitcombe D."/>
            <person name="Wharam S."/>
            <person name="Gibson M."/>
            <person name="Allison G."/>
            <person name="Bunce N."/>
            <person name="Barallon R."/>
            <person name="Douglas P."/>
            <person name="Mulholland V."/>
            <person name="Stevens S."/>
            <person name="Walker S."/>
            <person name="Salmond G.P.C."/>
        </authorList>
    </citation>
    <scope>NUCLEOTIDE SEQUENCE [GENOMIC DNA]</scope>
    <source>
        <strain>SCRI 193</strain>
    </source>
</reference>
<dbReference type="EMBL" id="X70049">
    <property type="protein sequence ID" value="CAA49653.1"/>
    <property type="molecule type" value="Genomic_DNA"/>
</dbReference>
<dbReference type="PIR" id="S32866">
    <property type="entry name" value="S32866"/>
</dbReference>
<dbReference type="SMR" id="P31708"/>
<dbReference type="GO" id="GO:0009276">
    <property type="term" value="C:Gram-negative-bacterium-type cell wall"/>
    <property type="evidence" value="ECO:0007669"/>
    <property type="project" value="InterPro"/>
</dbReference>
<dbReference type="GO" id="GO:0005886">
    <property type="term" value="C:plasma membrane"/>
    <property type="evidence" value="ECO:0007669"/>
    <property type="project" value="UniProtKB-SubCell"/>
</dbReference>
<dbReference type="GO" id="GO:0015627">
    <property type="term" value="C:type II protein secretion system complex"/>
    <property type="evidence" value="ECO:0007669"/>
    <property type="project" value="InterPro"/>
</dbReference>
<dbReference type="GO" id="GO:0015628">
    <property type="term" value="P:protein secretion by the type II secretion system"/>
    <property type="evidence" value="ECO:0007669"/>
    <property type="project" value="InterPro"/>
</dbReference>
<dbReference type="CDD" id="cd24017">
    <property type="entry name" value="ASKHA_T2SSL_N"/>
    <property type="match status" value="1"/>
</dbReference>
<dbReference type="Gene3D" id="3.30.420.370">
    <property type="match status" value="1"/>
</dbReference>
<dbReference type="Gene3D" id="3.30.420.380">
    <property type="match status" value="1"/>
</dbReference>
<dbReference type="Gene3D" id="3.30.1360.100">
    <property type="entry name" value="General secretion pathway protein M, EpsM"/>
    <property type="match status" value="1"/>
</dbReference>
<dbReference type="InterPro" id="IPR043129">
    <property type="entry name" value="ATPase_NBD"/>
</dbReference>
<dbReference type="InterPro" id="IPR024230">
    <property type="entry name" value="GspL_cyto_dom"/>
</dbReference>
<dbReference type="InterPro" id="IPR025691">
    <property type="entry name" value="GspL_pp_dom"/>
</dbReference>
<dbReference type="InterPro" id="IPR007812">
    <property type="entry name" value="T2SS_protein-GspL"/>
</dbReference>
<dbReference type="NCBIfam" id="TIGR01709">
    <property type="entry name" value="typeII_sec_gspL"/>
    <property type="match status" value="1"/>
</dbReference>
<dbReference type="Pfam" id="PF12693">
    <property type="entry name" value="GspL_C"/>
    <property type="match status" value="1"/>
</dbReference>
<dbReference type="Pfam" id="PF05134">
    <property type="entry name" value="T2SSL"/>
    <property type="match status" value="1"/>
</dbReference>
<dbReference type="PIRSF" id="PIRSF015761">
    <property type="entry name" value="Protein_L"/>
    <property type="match status" value="1"/>
</dbReference>
<dbReference type="SUPFAM" id="SSF53067">
    <property type="entry name" value="Actin-like ATPase domain"/>
    <property type="match status" value="2"/>
</dbReference>
<keyword id="KW-0997">Cell inner membrane</keyword>
<keyword id="KW-1003">Cell membrane</keyword>
<keyword id="KW-0472">Membrane</keyword>
<keyword id="KW-0653">Protein transport</keyword>
<keyword id="KW-0812">Transmembrane</keyword>
<keyword id="KW-1133">Transmembrane helix</keyword>
<keyword id="KW-0813">Transport</keyword>
<sequence length="425" mass="47640">MKIAGKWKRKAAKAPLHRGTVARHPCLIVRLPVEEQGEIEWQVRSSNGESLLSQGRGSIEQVRPALAAYPSVTFTRVLVPATDVTFYALTLPRQARRHVTQVVPFMLEDQLATEIEKLHFAVLEIHGDDGTVAVVEKNRMQRWLAQCDALGLSVDTLLPDARVLPKHQDGWSALQHDDMWLFRQPTGHAMAAESSWCGDLLKASMPLPAIYSYSAASVGGELAQYEWQEEGEWKAQPETDLFTLAATAHLPASVDLRQGDYAPDKAWQNTLLPWRGVGIAFACYLLLVVADAGWAHYQLYQQAEHWRQESVRVYRQIFPSETNVVNPRAQMQQHLQRTAAGGAGKALLDQLTPLQQLMTQNSAIKIQSLSYDGAAGEFRLALQGTSYQELEQFQQQAAAYYQVQAGEMRQENDRVEGRLTLRSQQ</sequence>
<protein>
    <recommendedName>
        <fullName>Type II secretion system protein L</fullName>
        <shortName>T2SS protein L</shortName>
    </recommendedName>
    <alternativeName>
        <fullName>General secretion pathway protein L</fullName>
    </alternativeName>
    <alternativeName>
        <fullName>Pectic enzymes secretion protein OutL</fullName>
    </alternativeName>
</protein>
<accession>P31708</accession>
<evidence type="ECO:0000250" key="1">
    <source>
        <dbReference type="UniProtKB" id="P25060"/>
    </source>
</evidence>
<evidence type="ECO:0000250" key="2">
    <source>
        <dbReference type="UniProtKB" id="Q00514"/>
    </source>
</evidence>
<evidence type="ECO:0000255" key="3"/>
<evidence type="ECO:0000305" key="4"/>
<feature type="chain" id="PRO_0000207315" description="Type II secretion system protein L">
    <location>
        <begin position="1"/>
        <end position="425"/>
    </location>
</feature>
<feature type="topological domain" description="Cytoplasmic" evidence="1">
    <location>
        <begin position="1"/>
        <end position="273"/>
    </location>
</feature>
<feature type="transmembrane region" description="Helical" evidence="3">
    <location>
        <begin position="274"/>
        <end position="290"/>
    </location>
</feature>
<feature type="topological domain" description="Periplasmic" evidence="1">
    <location>
        <begin position="291"/>
        <end position="425"/>
    </location>
</feature>
<gene>
    <name type="primary">outL</name>
</gene>
<name>GSPL_PECCC</name>
<comment type="function">
    <text evidence="1">Inner membrane component of the type II secretion system required for the energy-dependent secretion of extracellular factors such as proteases and toxins from the periplasm. Plays a role in the complex assembly and recruits OutM resulting in a stable complex in the inner membrane. Provides thus a link between the energy-providing OutE protein in the cytoplasm and the rest of the T2SS machinery.</text>
</comment>
<comment type="subunit">
    <text evidence="1 2">Type II secretion system is composed of four main components: the outer membrane complex, the inner membrane complex, the cytoplasmic secretion ATPase and the periplasm-spanning pseudopilus (By similarity). Forms homodimers. Interacts with OutM/GspM. Interacts with OutE/GspE and OutF/GspF (By similarity).</text>
</comment>
<comment type="subcellular location">
    <subcellularLocation>
        <location evidence="1">Cell inner membrane</location>
        <topology evidence="1">Single-pass membrane protein</topology>
    </subcellularLocation>
</comment>
<comment type="similarity">
    <text evidence="4">Belongs to the GSP L family.</text>
</comment>
<organism>
    <name type="scientific">Pectobacterium carotovorum subsp. carotovorum</name>
    <name type="common">Erwinia carotovora subsp. carotovora</name>
    <dbReference type="NCBI Taxonomy" id="555"/>
    <lineage>
        <taxon>Bacteria</taxon>
        <taxon>Pseudomonadati</taxon>
        <taxon>Pseudomonadota</taxon>
        <taxon>Gammaproteobacteria</taxon>
        <taxon>Enterobacterales</taxon>
        <taxon>Pectobacteriaceae</taxon>
        <taxon>Pectobacterium</taxon>
    </lineage>
</organism>
<proteinExistence type="inferred from homology"/>